<reference key="1">
    <citation type="journal article" date="2001" name="Science">
        <title>Gene families from the Arabidopsis thaliana pollen coat proteome.</title>
        <authorList>
            <person name="Mayfield J.A."/>
            <person name="Fiebig A."/>
            <person name="Johnstone S.E."/>
            <person name="Preuss D."/>
        </authorList>
    </citation>
    <scope>NUCLEOTIDE SEQUENCE [MRNA]</scope>
    <scope>TISSUE SPECIFICITY</scope>
</reference>
<reference key="2">
    <citation type="journal article" date="2000" name="Nature">
        <title>Sequence and analysis of chromosome 1 of the plant Arabidopsis thaliana.</title>
        <authorList>
            <person name="Theologis A."/>
            <person name="Ecker J.R."/>
            <person name="Palm C.J."/>
            <person name="Federspiel N.A."/>
            <person name="Kaul S."/>
            <person name="White O."/>
            <person name="Alonso J."/>
            <person name="Altafi H."/>
            <person name="Araujo R."/>
            <person name="Bowman C.L."/>
            <person name="Brooks S.Y."/>
            <person name="Buehler E."/>
            <person name="Chan A."/>
            <person name="Chao Q."/>
            <person name="Chen H."/>
            <person name="Cheuk R.F."/>
            <person name="Chin C.W."/>
            <person name="Chung M.K."/>
            <person name="Conn L."/>
            <person name="Conway A.B."/>
            <person name="Conway A.R."/>
            <person name="Creasy T.H."/>
            <person name="Dewar K."/>
            <person name="Dunn P."/>
            <person name="Etgu P."/>
            <person name="Feldblyum T.V."/>
            <person name="Feng J.-D."/>
            <person name="Fong B."/>
            <person name="Fujii C.Y."/>
            <person name="Gill J.E."/>
            <person name="Goldsmith A.D."/>
            <person name="Haas B."/>
            <person name="Hansen N.F."/>
            <person name="Hughes B."/>
            <person name="Huizar L."/>
            <person name="Hunter J.L."/>
            <person name="Jenkins J."/>
            <person name="Johnson-Hopson C."/>
            <person name="Khan S."/>
            <person name="Khaykin E."/>
            <person name="Kim C.J."/>
            <person name="Koo H.L."/>
            <person name="Kremenetskaia I."/>
            <person name="Kurtz D.B."/>
            <person name="Kwan A."/>
            <person name="Lam B."/>
            <person name="Langin-Hooper S."/>
            <person name="Lee A."/>
            <person name="Lee J.M."/>
            <person name="Lenz C.A."/>
            <person name="Li J.H."/>
            <person name="Li Y.-P."/>
            <person name="Lin X."/>
            <person name="Liu S.X."/>
            <person name="Liu Z.A."/>
            <person name="Luros J.S."/>
            <person name="Maiti R."/>
            <person name="Marziali A."/>
            <person name="Militscher J."/>
            <person name="Miranda M."/>
            <person name="Nguyen M."/>
            <person name="Nierman W.C."/>
            <person name="Osborne B.I."/>
            <person name="Pai G."/>
            <person name="Peterson J."/>
            <person name="Pham P.K."/>
            <person name="Rizzo M."/>
            <person name="Rooney T."/>
            <person name="Rowley D."/>
            <person name="Sakano H."/>
            <person name="Salzberg S.L."/>
            <person name="Schwartz J.R."/>
            <person name="Shinn P."/>
            <person name="Southwick A.M."/>
            <person name="Sun H."/>
            <person name="Tallon L.J."/>
            <person name="Tambunga G."/>
            <person name="Toriumi M.J."/>
            <person name="Town C.D."/>
            <person name="Utterback T."/>
            <person name="Van Aken S."/>
            <person name="Vaysberg M."/>
            <person name="Vysotskaia V.S."/>
            <person name="Walker M."/>
            <person name="Wu D."/>
            <person name="Yu G."/>
            <person name="Fraser C.M."/>
            <person name="Venter J.C."/>
            <person name="Davis R.W."/>
        </authorList>
    </citation>
    <scope>NUCLEOTIDE SEQUENCE [LARGE SCALE GENOMIC DNA]</scope>
    <source>
        <strain>cv. Columbia</strain>
    </source>
</reference>
<reference key="3">
    <citation type="journal article" date="2017" name="Plant J.">
        <title>Araport11: a complete reannotation of the Arabidopsis thaliana reference genome.</title>
        <authorList>
            <person name="Cheng C.Y."/>
            <person name="Krishnakumar V."/>
            <person name="Chan A.P."/>
            <person name="Thibaud-Nissen F."/>
            <person name="Schobel S."/>
            <person name="Town C.D."/>
        </authorList>
    </citation>
    <scope>GENOME REANNOTATION</scope>
    <source>
        <strain>cv. Columbia</strain>
    </source>
</reference>
<reference key="4">
    <citation type="journal article" date="2002" name="Science">
        <title>Functional annotation of a full-length Arabidopsis cDNA collection.</title>
        <authorList>
            <person name="Seki M."/>
            <person name="Narusaka M."/>
            <person name="Kamiya A."/>
            <person name="Ishida J."/>
            <person name="Satou M."/>
            <person name="Sakurai T."/>
            <person name="Nakajima M."/>
            <person name="Enju A."/>
            <person name="Akiyama K."/>
            <person name="Oono Y."/>
            <person name="Muramatsu M."/>
            <person name="Hayashizaki Y."/>
            <person name="Kawai J."/>
            <person name="Carninci P."/>
            <person name="Itoh M."/>
            <person name="Ishii Y."/>
            <person name="Arakawa T."/>
            <person name="Shibata K."/>
            <person name="Shinagawa A."/>
            <person name="Shinozaki K."/>
        </authorList>
    </citation>
    <scope>NUCLEOTIDE SEQUENCE [LARGE SCALE MRNA]</scope>
    <source>
        <strain>cv. Columbia</strain>
    </source>
</reference>
<reference key="5">
    <citation type="journal article" date="2004" name="Prog. Lipid Res.">
        <title>GDSL family of serine esterases/lipases.</title>
        <authorList>
            <person name="Akoh C.C."/>
            <person name="Lee G.-C."/>
            <person name="Liaw Y.-C."/>
            <person name="Huang T.-H."/>
            <person name="Shaw J.-F."/>
        </authorList>
    </citation>
    <scope>REVIEW</scope>
</reference>
<reference key="6">
    <citation type="journal article" date="2008" name="Pak. J. Biol. Sci.">
        <title>Sequence analysis of GDSL lipase gene family in Arabidopsis thaliana.</title>
        <authorList>
            <person name="Ling H."/>
        </authorList>
    </citation>
    <scope>GENE FAMILY</scope>
</reference>
<name>EXL3_ARATH</name>
<accession>Q94CH6</accession>
<accession>Q8GZ94</accession>
<accession>Q9LQS5</accession>
<sequence length="364" mass="39816">MKDNSSWSCSCSWSSWKICLLSVLFLTETITAVKLPPKLIIPAVIAFGDSIVDTGMNNNVKTVVKCDFLPYGINFQSGVATGRFCDGRVPADLLAEELGIKSIVPAYLDPNLKSKDLLTGVSFASGGSGYDPITPKLVAVISLEDQLSYFEEYIEKVKNIVGEARKDFIVANSLFLLVAGSDDIANTYYTLRARPEYDVDSYTTLMSDSASEFVTKLYGYGVRRVAVFGAPPIGCVPSQRTLGGGILRDCADNYNEAAKLFNSKLSPKLDSLRKTLPGIKPIYINIYDPLFDIIQNPANYGFEVSNKGCCGTGAIEVAVLCNKITSSVCPDVSTHVFWDSYHPTEKTYKVLVSLLINKFVNQFV</sequence>
<organism>
    <name type="scientific">Arabidopsis thaliana</name>
    <name type="common">Mouse-ear cress</name>
    <dbReference type="NCBI Taxonomy" id="3702"/>
    <lineage>
        <taxon>Eukaryota</taxon>
        <taxon>Viridiplantae</taxon>
        <taxon>Streptophyta</taxon>
        <taxon>Embryophyta</taxon>
        <taxon>Tracheophyta</taxon>
        <taxon>Spermatophyta</taxon>
        <taxon>Magnoliopsida</taxon>
        <taxon>eudicotyledons</taxon>
        <taxon>Gunneridae</taxon>
        <taxon>Pentapetalae</taxon>
        <taxon>rosids</taxon>
        <taxon>malvids</taxon>
        <taxon>Brassicales</taxon>
        <taxon>Brassicaceae</taxon>
        <taxon>Camelineae</taxon>
        <taxon>Arabidopsis</taxon>
    </lineage>
</organism>
<protein>
    <recommendedName>
        <fullName>GDSL esterase/lipase EXL3</fullName>
        <ecNumber>3.1.1.-</ecNumber>
    </recommendedName>
    <alternativeName>
        <fullName>Family II extracellular lipase 3</fullName>
        <shortName>Family II lipase EXL3</shortName>
    </alternativeName>
</protein>
<dbReference type="EC" id="3.1.1.-"/>
<dbReference type="EMBL" id="AY028611">
    <property type="protein sequence ID" value="AAK30018.1"/>
    <property type="molecule type" value="mRNA"/>
</dbReference>
<dbReference type="EMBL" id="AC007396">
    <property type="protein sequence ID" value="AAF79815.1"/>
    <property type="status" value="ALT_SEQ"/>
    <property type="molecule type" value="Genomic_DNA"/>
</dbReference>
<dbReference type="EMBL" id="CP002684">
    <property type="protein sequence ID" value="AEE35772.1"/>
    <property type="molecule type" value="Genomic_DNA"/>
</dbReference>
<dbReference type="EMBL" id="AK117131">
    <property type="protein sequence ID" value="BAC41809.1"/>
    <property type="molecule type" value="mRNA"/>
</dbReference>
<dbReference type="PIR" id="A96788">
    <property type="entry name" value="A96788"/>
</dbReference>
<dbReference type="RefSeq" id="NP_177718.1">
    <property type="nucleotide sequence ID" value="NM_106240.5"/>
</dbReference>
<dbReference type="SMR" id="Q94CH6"/>
<dbReference type="FunCoup" id="Q94CH6">
    <property type="interactions" value="133"/>
</dbReference>
<dbReference type="STRING" id="3702.Q94CH6"/>
<dbReference type="PaxDb" id="3702-AT1G75900.1"/>
<dbReference type="ProteomicsDB" id="222233"/>
<dbReference type="EnsemblPlants" id="AT1G75900.1">
    <property type="protein sequence ID" value="AT1G75900.1"/>
    <property type="gene ID" value="AT1G75900"/>
</dbReference>
<dbReference type="GeneID" id="843923"/>
<dbReference type="Gramene" id="AT1G75900.1">
    <property type="protein sequence ID" value="AT1G75900.1"/>
    <property type="gene ID" value="AT1G75900"/>
</dbReference>
<dbReference type="KEGG" id="ath:AT1G75900"/>
<dbReference type="Araport" id="AT1G75900"/>
<dbReference type="TAIR" id="AT1G75900"/>
<dbReference type="eggNOG" id="ENOG502QW19">
    <property type="taxonomic scope" value="Eukaryota"/>
</dbReference>
<dbReference type="HOGENOM" id="CLU_015101_0_1_1"/>
<dbReference type="InParanoid" id="Q94CH6"/>
<dbReference type="OMA" id="YLPMAMG"/>
<dbReference type="PhylomeDB" id="Q94CH6"/>
<dbReference type="BioCyc" id="ARA:AT1G75900-MONOMER"/>
<dbReference type="PRO" id="PR:Q94CH6"/>
<dbReference type="Proteomes" id="UP000006548">
    <property type="component" value="Chromosome 1"/>
</dbReference>
<dbReference type="ExpressionAtlas" id="Q94CH6">
    <property type="expression patterns" value="baseline and differential"/>
</dbReference>
<dbReference type="GO" id="GO:0005783">
    <property type="term" value="C:endoplasmic reticulum"/>
    <property type="evidence" value="ECO:0000314"/>
    <property type="project" value="TAIR"/>
</dbReference>
<dbReference type="GO" id="GO:0005576">
    <property type="term" value="C:extracellular region"/>
    <property type="evidence" value="ECO:0007669"/>
    <property type="project" value="UniProtKB-SubCell"/>
</dbReference>
<dbReference type="GO" id="GO:0016298">
    <property type="term" value="F:lipase activity"/>
    <property type="evidence" value="ECO:0007669"/>
    <property type="project" value="InterPro"/>
</dbReference>
<dbReference type="GO" id="GO:0016042">
    <property type="term" value="P:lipid catabolic process"/>
    <property type="evidence" value="ECO:0007669"/>
    <property type="project" value="UniProtKB-KW"/>
</dbReference>
<dbReference type="CDD" id="cd01837">
    <property type="entry name" value="SGNH_plant_lipase_like"/>
    <property type="match status" value="1"/>
</dbReference>
<dbReference type="FunFam" id="3.40.50.1110:FF:000003">
    <property type="entry name" value="GDSL esterase/lipase APG"/>
    <property type="match status" value="1"/>
</dbReference>
<dbReference type="Gene3D" id="3.40.50.1110">
    <property type="entry name" value="SGNH hydrolase"/>
    <property type="match status" value="1"/>
</dbReference>
<dbReference type="InterPro" id="IPR001087">
    <property type="entry name" value="GDSL"/>
</dbReference>
<dbReference type="InterPro" id="IPR050592">
    <property type="entry name" value="GDSL_lipolytic_enzyme"/>
</dbReference>
<dbReference type="InterPro" id="IPR008265">
    <property type="entry name" value="Lipase_GDSL_AS"/>
</dbReference>
<dbReference type="InterPro" id="IPR036514">
    <property type="entry name" value="SGNH_hydro_sf"/>
</dbReference>
<dbReference type="InterPro" id="IPR035669">
    <property type="entry name" value="SGNH_plant_lipase-like"/>
</dbReference>
<dbReference type="PANTHER" id="PTHR45642">
    <property type="entry name" value="GDSL ESTERASE/LIPASE EXL3"/>
    <property type="match status" value="1"/>
</dbReference>
<dbReference type="PANTHER" id="PTHR45642:SF150">
    <property type="entry name" value="GDSL ESTERASE_LIPASE EXL3"/>
    <property type="match status" value="1"/>
</dbReference>
<dbReference type="Pfam" id="PF00657">
    <property type="entry name" value="Lipase_GDSL"/>
    <property type="match status" value="1"/>
</dbReference>
<dbReference type="PROSITE" id="PS01098">
    <property type="entry name" value="LIPASE_GDSL_SER"/>
    <property type="match status" value="1"/>
</dbReference>
<gene>
    <name type="primary">EXL3</name>
    <name type="ordered locus">At1g75900</name>
    <name type="ORF">T4O12.13</name>
</gene>
<keyword id="KW-0378">Hydrolase</keyword>
<keyword id="KW-0442">Lipid degradation</keyword>
<keyword id="KW-0443">Lipid metabolism</keyword>
<keyword id="KW-1185">Reference proteome</keyword>
<keyword id="KW-0964">Secreted</keyword>
<keyword id="KW-0732">Signal</keyword>
<comment type="subcellular location">
    <subcellularLocation>
        <location evidence="4">Secreted</location>
    </subcellularLocation>
</comment>
<comment type="tissue specificity">
    <text evidence="3">Flower buds.</text>
</comment>
<comment type="similarity">
    <text evidence="4">Belongs to the 'GDSL' lipolytic enzyme family.</text>
</comment>
<comment type="sequence caution" evidence="4">
    <conflict type="erroneous gene model prediction">
        <sequence resource="EMBL-CDS" id="AAF79815"/>
    </conflict>
    <text>The predicted gene At1g75900 has been split into 2 genes: At1g75900 and At1g75910.</text>
</comment>
<feature type="signal peptide" evidence="2">
    <location>
        <begin position="1"/>
        <end position="32"/>
    </location>
</feature>
<feature type="chain" id="PRO_0000367330" description="GDSL esterase/lipase EXL3">
    <location>
        <begin position="33"/>
        <end position="364"/>
    </location>
</feature>
<feature type="active site" description="Nucleophile" evidence="1">
    <location>
        <position position="50"/>
    </location>
</feature>
<feature type="active site" evidence="1">
    <location>
        <position position="339"/>
    </location>
</feature>
<feature type="active site" evidence="1">
    <location>
        <position position="342"/>
    </location>
</feature>
<feature type="sequence conflict" description="In Ref. 4; BAC41809." evidence="4" ref="4">
    <original>M</original>
    <variation>I</variation>
    <location>
        <position position="56"/>
    </location>
</feature>
<proteinExistence type="evidence at transcript level"/>
<evidence type="ECO:0000250" key="1"/>
<evidence type="ECO:0000255" key="2"/>
<evidence type="ECO:0000269" key="3">
    <source>
    </source>
</evidence>
<evidence type="ECO:0000305" key="4"/>